<keyword id="KW-1185">Reference proteome</keyword>
<keyword id="KW-0687">Ribonucleoprotein</keyword>
<keyword id="KW-0689">Ribosomal protein</keyword>
<keyword id="KW-0694">RNA-binding</keyword>
<keyword id="KW-0699">rRNA-binding</keyword>
<keyword id="KW-0820">tRNA-binding</keyword>
<gene>
    <name evidence="1" type="primary">rpsM</name>
    <name type="ordered locus">Dtur_1005</name>
</gene>
<reference key="1">
    <citation type="journal article" date="2016" name="Front. Microbiol.">
        <title>The complete genome sequence of hyperthermophile Dictyoglomus turgidum DSM 6724 reveals a specialized carbohydrate fermentor.</title>
        <authorList>
            <person name="Brumm P.J."/>
            <person name="Gowda K."/>
            <person name="Robb F.T."/>
            <person name="Mead D.A."/>
        </authorList>
    </citation>
    <scope>NUCLEOTIDE SEQUENCE [LARGE SCALE GENOMIC DNA]</scope>
    <source>
        <strain>DSM 6724 / Z-1310</strain>
    </source>
</reference>
<name>RS13_DICTD</name>
<evidence type="ECO:0000255" key="1">
    <source>
        <dbReference type="HAMAP-Rule" id="MF_01315"/>
    </source>
</evidence>
<evidence type="ECO:0000256" key="2">
    <source>
        <dbReference type="SAM" id="MobiDB-lite"/>
    </source>
</evidence>
<evidence type="ECO:0000305" key="3"/>
<accession>B8E1F7</accession>
<organism>
    <name type="scientific">Dictyoglomus turgidum (strain DSM 6724 / Z-1310)</name>
    <dbReference type="NCBI Taxonomy" id="515635"/>
    <lineage>
        <taxon>Bacteria</taxon>
        <taxon>Pseudomonadati</taxon>
        <taxon>Dictyoglomota</taxon>
        <taxon>Dictyoglomia</taxon>
        <taxon>Dictyoglomales</taxon>
        <taxon>Dictyoglomaceae</taxon>
        <taxon>Dictyoglomus</taxon>
    </lineage>
</organism>
<proteinExistence type="inferred from homology"/>
<comment type="function">
    <text evidence="1">Located at the top of the head of the 30S subunit, it contacts several helices of the 16S rRNA. In the 70S ribosome it contacts the 23S rRNA (bridge B1a) and protein L5 of the 50S subunit (bridge B1b), connecting the 2 subunits; these bridges are implicated in subunit movement. Contacts the tRNAs in the A and P-sites.</text>
</comment>
<comment type="subunit">
    <text evidence="1">Part of the 30S ribosomal subunit. Forms a loose heterodimer with protein S19. Forms two bridges to the 50S subunit in the 70S ribosome.</text>
</comment>
<comment type="similarity">
    <text evidence="1">Belongs to the universal ribosomal protein uS13 family.</text>
</comment>
<sequence>MARIAGVDLPSNKKVEIALTYIYGIGRTTSKKILQATGVDPNKRVKDLTEEEISKLREEIENNYKVEGDLRQEVAANIRRLIEIGCYRGIRHKRGLPVRGQRTRCNARTRKGPRKTVGAKRKEK</sequence>
<dbReference type="EMBL" id="CP001251">
    <property type="protein sequence ID" value="ACK42285.1"/>
    <property type="molecule type" value="Genomic_DNA"/>
</dbReference>
<dbReference type="RefSeq" id="WP_012583368.1">
    <property type="nucleotide sequence ID" value="NC_011661.1"/>
</dbReference>
<dbReference type="RefSeq" id="YP_002352899.1">
    <property type="nucleotide sequence ID" value="NC_011661.1"/>
</dbReference>
<dbReference type="SMR" id="B8E1F7"/>
<dbReference type="FunCoup" id="B8E1F7">
    <property type="interactions" value="407"/>
</dbReference>
<dbReference type="STRING" id="515635.Dtur_1005"/>
<dbReference type="EnsemblBacteria" id="ACK42285">
    <property type="protein sequence ID" value="ACK42285"/>
    <property type="gene ID" value="Dtur_1005"/>
</dbReference>
<dbReference type="KEGG" id="dtu:Dtur_1005"/>
<dbReference type="PATRIC" id="fig|515635.4.peg.1042"/>
<dbReference type="eggNOG" id="COG0099">
    <property type="taxonomic scope" value="Bacteria"/>
</dbReference>
<dbReference type="HOGENOM" id="CLU_103849_1_2_0"/>
<dbReference type="InParanoid" id="B8E1F7"/>
<dbReference type="OrthoDB" id="9803610at2"/>
<dbReference type="Proteomes" id="UP000007719">
    <property type="component" value="Chromosome"/>
</dbReference>
<dbReference type="GO" id="GO:0005829">
    <property type="term" value="C:cytosol"/>
    <property type="evidence" value="ECO:0000318"/>
    <property type="project" value="GO_Central"/>
</dbReference>
<dbReference type="GO" id="GO:0015935">
    <property type="term" value="C:small ribosomal subunit"/>
    <property type="evidence" value="ECO:0000318"/>
    <property type="project" value="GO_Central"/>
</dbReference>
<dbReference type="GO" id="GO:0019843">
    <property type="term" value="F:rRNA binding"/>
    <property type="evidence" value="ECO:0007669"/>
    <property type="project" value="UniProtKB-UniRule"/>
</dbReference>
<dbReference type="GO" id="GO:0003735">
    <property type="term" value="F:structural constituent of ribosome"/>
    <property type="evidence" value="ECO:0007669"/>
    <property type="project" value="InterPro"/>
</dbReference>
<dbReference type="GO" id="GO:0000049">
    <property type="term" value="F:tRNA binding"/>
    <property type="evidence" value="ECO:0007669"/>
    <property type="project" value="UniProtKB-UniRule"/>
</dbReference>
<dbReference type="GO" id="GO:0006412">
    <property type="term" value="P:translation"/>
    <property type="evidence" value="ECO:0007669"/>
    <property type="project" value="UniProtKB-UniRule"/>
</dbReference>
<dbReference type="FunFam" id="1.10.8.50:FF:000001">
    <property type="entry name" value="30S ribosomal protein S13"/>
    <property type="match status" value="1"/>
</dbReference>
<dbReference type="FunFam" id="4.10.910.10:FF:000001">
    <property type="entry name" value="30S ribosomal protein S13"/>
    <property type="match status" value="1"/>
</dbReference>
<dbReference type="Gene3D" id="1.10.8.50">
    <property type="match status" value="1"/>
</dbReference>
<dbReference type="Gene3D" id="4.10.910.10">
    <property type="entry name" value="30s ribosomal protein s13, domain 2"/>
    <property type="match status" value="1"/>
</dbReference>
<dbReference type="HAMAP" id="MF_01315">
    <property type="entry name" value="Ribosomal_uS13"/>
    <property type="match status" value="1"/>
</dbReference>
<dbReference type="InterPro" id="IPR027437">
    <property type="entry name" value="Rbsml_uS13_C"/>
</dbReference>
<dbReference type="InterPro" id="IPR001892">
    <property type="entry name" value="Ribosomal_uS13"/>
</dbReference>
<dbReference type="InterPro" id="IPR010979">
    <property type="entry name" value="Ribosomal_uS13-like_H2TH"/>
</dbReference>
<dbReference type="InterPro" id="IPR019980">
    <property type="entry name" value="Ribosomal_uS13_bac-type"/>
</dbReference>
<dbReference type="InterPro" id="IPR018269">
    <property type="entry name" value="Ribosomal_uS13_CS"/>
</dbReference>
<dbReference type="NCBIfam" id="TIGR03631">
    <property type="entry name" value="uS13_bact"/>
    <property type="match status" value="1"/>
</dbReference>
<dbReference type="PANTHER" id="PTHR10871">
    <property type="entry name" value="30S RIBOSOMAL PROTEIN S13/40S RIBOSOMAL PROTEIN S18"/>
    <property type="match status" value="1"/>
</dbReference>
<dbReference type="PANTHER" id="PTHR10871:SF1">
    <property type="entry name" value="SMALL RIBOSOMAL SUBUNIT PROTEIN US13M"/>
    <property type="match status" value="1"/>
</dbReference>
<dbReference type="Pfam" id="PF00416">
    <property type="entry name" value="Ribosomal_S13"/>
    <property type="match status" value="1"/>
</dbReference>
<dbReference type="PIRSF" id="PIRSF002134">
    <property type="entry name" value="Ribosomal_S13"/>
    <property type="match status" value="1"/>
</dbReference>
<dbReference type="SUPFAM" id="SSF46946">
    <property type="entry name" value="S13-like H2TH domain"/>
    <property type="match status" value="1"/>
</dbReference>
<dbReference type="PROSITE" id="PS00646">
    <property type="entry name" value="RIBOSOMAL_S13_1"/>
    <property type="match status" value="1"/>
</dbReference>
<dbReference type="PROSITE" id="PS50159">
    <property type="entry name" value="RIBOSOMAL_S13_2"/>
    <property type="match status" value="1"/>
</dbReference>
<protein>
    <recommendedName>
        <fullName evidence="1">Small ribosomal subunit protein uS13</fullName>
    </recommendedName>
    <alternativeName>
        <fullName evidence="3">30S ribosomal protein S13</fullName>
    </alternativeName>
</protein>
<feature type="chain" id="PRO_1000141259" description="Small ribosomal subunit protein uS13">
    <location>
        <begin position="1"/>
        <end position="124"/>
    </location>
</feature>
<feature type="region of interest" description="Disordered" evidence="2">
    <location>
        <begin position="98"/>
        <end position="124"/>
    </location>
</feature>